<sequence length="44" mass="5361">MKRTYQPSKIRRQRKHGFRHRMSTKNGRRVLAARRRKGRKVLSA</sequence>
<organism>
    <name type="scientific">Streptococcus pyogenes serotype M5 (strain Manfredo)</name>
    <dbReference type="NCBI Taxonomy" id="160491"/>
    <lineage>
        <taxon>Bacteria</taxon>
        <taxon>Bacillati</taxon>
        <taxon>Bacillota</taxon>
        <taxon>Bacilli</taxon>
        <taxon>Lactobacillales</taxon>
        <taxon>Streptococcaceae</taxon>
        <taxon>Streptococcus</taxon>
    </lineage>
</organism>
<feature type="chain" id="PRO_1000013467" description="Large ribosomal subunit protein bL34">
    <location>
        <begin position="1"/>
        <end position="44"/>
    </location>
</feature>
<feature type="region of interest" description="Disordered" evidence="2">
    <location>
        <begin position="1"/>
        <end position="44"/>
    </location>
</feature>
<proteinExistence type="inferred from homology"/>
<comment type="similarity">
    <text evidence="1">Belongs to the bacterial ribosomal protein bL34 family.</text>
</comment>
<dbReference type="EMBL" id="AM295007">
    <property type="protein sequence ID" value="CAM29533.1"/>
    <property type="molecule type" value="Genomic_DNA"/>
</dbReference>
<dbReference type="RefSeq" id="WP_002885866.1">
    <property type="nucleotide sequence ID" value="NC_009332.1"/>
</dbReference>
<dbReference type="SMR" id="A2RCG1"/>
<dbReference type="GeneID" id="93923177"/>
<dbReference type="KEGG" id="spf:SpyM50190"/>
<dbReference type="HOGENOM" id="CLU_129938_2_0_9"/>
<dbReference type="GO" id="GO:1990904">
    <property type="term" value="C:ribonucleoprotein complex"/>
    <property type="evidence" value="ECO:0007669"/>
    <property type="project" value="UniProtKB-KW"/>
</dbReference>
<dbReference type="GO" id="GO:0005840">
    <property type="term" value="C:ribosome"/>
    <property type="evidence" value="ECO:0007669"/>
    <property type="project" value="UniProtKB-KW"/>
</dbReference>
<dbReference type="GO" id="GO:0003735">
    <property type="term" value="F:structural constituent of ribosome"/>
    <property type="evidence" value="ECO:0007669"/>
    <property type="project" value="InterPro"/>
</dbReference>
<dbReference type="GO" id="GO:0006412">
    <property type="term" value="P:translation"/>
    <property type="evidence" value="ECO:0007669"/>
    <property type="project" value="UniProtKB-UniRule"/>
</dbReference>
<dbReference type="FunFam" id="1.10.287.3980:FF:000001">
    <property type="entry name" value="Mitochondrial ribosomal protein L34"/>
    <property type="match status" value="1"/>
</dbReference>
<dbReference type="Gene3D" id="1.10.287.3980">
    <property type="match status" value="1"/>
</dbReference>
<dbReference type="HAMAP" id="MF_00391">
    <property type="entry name" value="Ribosomal_bL34"/>
    <property type="match status" value="1"/>
</dbReference>
<dbReference type="InterPro" id="IPR000271">
    <property type="entry name" value="Ribosomal_bL34"/>
</dbReference>
<dbReference type="InterPro" id="IPR020939">
    <property type="entry name" value="Ribosomal_bL34_CS"/>
</dbReference>
<dbReference type="NCBIfam" id="TIGR01030">
    <property type="entry name" value="rpmH_bact"/>
    <property type="match status" value="1"/>
</dbReference>
<dbReference type="PANTHER" id="PTHR14503:SF4">
    <property type="entry name" value="LARGE RIBOSOMAL SUBUNIT PROTEIN BL34M"/>
    <property type="match status" value="1"/>
</dbReference>
<dbReference type="PANTHER" id="PTHR14503">
    <property type="entry name" value="MITOCHONDRIAL RIBOSOMAL PROTEIN 34 FAMILY MEMBER"/>
    <property type="match status" value="1"/>
</dbReference>
<dbReference type="Pfam" id="PF00468">
    <property type="entry name" value="Ribosomal_L34"/>
    <property type="match status" value="1"/>
</dbReference>
<dbReference type="PROSITE" id="PS00784">
    <property type="entry name" value="RIBOSOMAL_L34"/>
    <property type="match status" value="1"/>
</dbReference>
<accession>A2RCG1</accession>
<keyword id="KW-0687">Ribonucleoprotein</keyword>
<keyword id="KW-0689">Ribosomal protein</keyword>
<protein>
    <recommendedName>
        <fullName evidence="1">Large ribosomal subunit protein bL34</fullName>
    </recommendedName>
    <alternativeName>
        <fullName evidence="3">50S ribosomal protein L34</fullName>
    </alternativeName>
</protein>
<evidence type="ECO:0000255" key="1">
    <source>
        <dbReference type="HAMAP-Rule" id="MF_00391"/>
    </source>
</evidence>
<evidence type="ECO:0000256" key="2">
    <source>
        <dbReference type="SAM" id="MobiDB-lite"/>
    </source>
</evidence>
<evidence type="ECO:0000305" key="3"/>
<gene>
    <name evidence="1" type="primary">rpmH</name>
    <name type="ordered locus">SpyM50190</name>
</gene>
<reference key="1">
    <citation type="journal article" date="2007" name="J. Bacteriol.">
        <title>Complete genome of acute rheumatic fever-associated serotype M5 Streptococcus pyogenes strain Manfredo.</title>
        <authorList>
            <person name="Holden M.T.G."/>
            <person name="Scott A."/>
            <person name="Cherevach I."/>
            <person name="Chillingworth T."/>
            <person name="Churcher C."/>
            <person name="Cronin A."/>
            <person name="Dowd L."/>
            <person name="Feltwell T."/>
            <person name="Hamlin N."/>
            <person name="Holroyd S."/>
            <person name="Jagels K."/>
            <person name="Moule S."/>
            <person name="Mungall K."/>
            <person name="Quail M.A."/>
            <person name="Price C."/>
            <person name="Rabbinowitsch E."/>
            <person name="Sharp S."/>
            <person name="Skelton J."/>
            <person name="Whitehead S."/>
            <person name="Barrell B.G."/>
            <person name="Kehoe M."/>
            <person name="Parkhill J."/>
        </authorList>
    </citation>
    <scope>NUCLEOTIDE SEQUENCE [LARGE SCALE GENOMIC DNA]</scope>
    <source>
        <strain>Manfredo</strain>
    </source>
</reference>
<name>RL34_STRPG</name>